<name>CYSA_BRUME</name>
<feature type="chain" id="PRO_0000092257" description="Sulfate/thiosulfate import ATP-binding protein CysA">
    <location>
        <begin position="1"/>
        <end position="359"/>
    </location>
</feature>
<feature type="domain" description="ABC transporter" evidence="1">
    <location>
        <begin position="3"/>
        <end position="237"/>
    </location>
</feature>
<feature type="binding site" evidence="1">
    <location>
        <begin position="35"/>
        <end position="42"/>
    </location>
    <ligand>
        <name>ATP</name>
        <dbReference type="ChEBI" id="CHEBI:30616"/>
    </ligand>
</feature>
<organism>
    <name type="scientific">Brucella melitensis biotype 1 (strain ATCC 23456 / CCUG 17765 / NCTC 10094 / 16M)</name>
    <dbReference type="NCBI Taxonomy" id="224914"/>
    <lineage>
        <taxon>Bacteria</taxon>
        <taxon>Pseudomonadati</taxon>
        <taxon>Pseudomonadota</taxon>
        <taxon>Alphaproteobacteria</taxon>
        <taxon>Hyphomicrobiales</taxon>
        <taxon>Brucellaceae</taxon>
        <taxon>Brucella/Ochrobactrum group</taxon>
        <taxon>Brucella</taxon>
    </lineage>
</organism>
<sequence>MEVRVAGVRKEFARFPALHNVSLTIQSGELIALLGPSGSGKTTLLRLIAGLETPTEGMIFFGDEDASQKSVQERNVGFVFQHYALFRHMTVADNIGFGLKVRPGGTRPSTAEIRRRALELLDLVQLSGLEKRYPAQLSGGQRQRVALARAMAIEPRVLLLDEPFGALDAQVRKELRRWLREIHDKTGHTTVFVTHDQDEALELADRVVVMSQGRIEQVGTPDEVYDKPNSPFVYGFIGESSTLPVRVENGEVWLADRNIGLGAENMPDGDAQLYFRPHDVELLDGCGGCIAGTVIASRRSGGKRRVELEVGGARERIEIEIPAEHPAAEKSRIAFRPRYWTLFRAGDSELPAPKAAATT</sequence>
<accession>P63353</accession>
<accession>Q8G342</accession>
<accession>Q8YEP0</accession>
<proteinExistence type="inferred from homology"/>
<protein>
    <recommendedName>
        <fullName evidence="1">Sulfate/thiosulfate import ATP-binding protein CysA</fullName>
        <ecNumber evidence="1">7.3.2.3</ecNumber>
    </recommendedName>
    <alternativeName>
        <fullName evidence="1">Sulfate-transporting ATPase</fullName>
    </alternativeName>
</protein>
<gene>
    <name evidence="1" type="primary">cysA</name>
    <name type="ordered locus">BMEI1838</name>
</gene>
<keyword id="KW-0067">ATP-binding</keyword>
<keyword id="KW-0997">Cell inner membrane</keyword>
<keyword id="KW-1003">Cell membrane</keyword>
<keyword id="KW-0472">Membrane</keyword>
<keyword id="KW-0547">Nucleotide-binding</keyword>
<keyword id="KW-0764">Sulfate transport</keyword>
<keyword id="KW-1278">Translocase</keyword>
<keyword id="KW-0813">Transport</keyword>
<evidence type="ECO:0000255" key="1">
    <source>
        <dbReference type="HAMAP-Rule" id="MF_01701"/>
    </source>
</evidence>
<evidence type="ECO:0000305" key="2"/>
<reference key="1">
    <citation type="journal article" date="2002" name="Proc. Natl. Acad. Sci. U.S.A.">
        <title>The genome sequence of the facultative intracellular pathogen Brucella melitensis.</title>
        <authorList>
            <person name="DelVecchio V.G."/>
            <person name="Kapatral V."/>
            <person name="Redkar R.J."/>
            <person name="Patra G."/>
            <person name="Mujer C."/>
            <person name="Los T."/>
            <person name="Ivanova N."/>
            <person name="Anderson I."/>
            <person name="Bhattacharyya A."/>
            <person name="Lykidis A."/>
            <person name="Reznik G."/>
            <person name="Jablonski L."/>
            <person name="Larsen N."/>
            <person name="D'Souza M."/>
            <person name="Bernal A."/>
            <person name="Mazur M."/>
            <person name="Goltsman E."/>
            <person name="Selkov E."/>
            <person name="Elzer P.H."/>
            <person name="Hagius S."/>
            <person name="O'Callaghan D."/>
            <person name="Letesson J.-J."/>
            <person name="Haselkorn R."/>
            <person name="Kyrpides N.C."/>
            <person name="Overbeek R."/>
        </authorList>
    </citation>
    <scope>NUCLEOTIDE SEQUENCE [LARGE SCALE GENOMIC DNA]</scope>
    <source>
        <strain>ATCC 23456 / CCUG 17765 / NCTC 10094 / 16M</strain>
    </source>
</reference>
<dbReference type="EC" id="7.3.2.3" evidence="1"/>
<dbReference type="EMBL" id="AE008917">
    <property type="protein sequence ID" value="AAL53019.1"/>
    <property type="status" value="ALT_INIT"/>
    <property type="molecule type" value="Genomic_DNA"/>
</dbReference>
<dbReference type="PIR" id="AH3481">
    <property type="entry name" value="AH3481"/>
</dbReference>
<dbReference type="RefSeq" id="WP_002965359.1">
    <property type="nucleotide sequence ID" value="NZ_GG703778.1"/>
</dbReference>
<dbReference type="SMR" id="P63353"/>
<dbReference type="KEGG" id="bme:BMEI1838"/>
<dbReference type="KEGG" id="bmel:DK63_1651"/>
<dbReference type="PATRIC" id="fig|224914.52.peg.1744"/>
<dbReference type="eggNOG" id="COG1118">
    <property type="taxonomic scope" value="Bacteria"/>
</dbReference>
<dbReference type="PhylomeDB" id="P63353"/>
<dbReference type="Proteomes" id="UP000000419">
    <property type="component" value="Chromosome I"/>
</dbReference>
<dbReference type="GO" id="GO:0043190">
    <property type="term" value="C:ATP-binding cassette (ABC) transporter complex"/>
    <property type="evidence" value="ECO:0007669"/>
    <property type="project" value="InterPro"/>
</dbReference>
<dbReference type="GO" id="GO:0015419">
    <property type="term" value="F:ABC-type sulfate transporter activity"/>
    <property type="evidence" value="ECO:0007669"/>
    <property type="project" value="InterPro"/>
</dbReference>
<dbReference type="GO" id="GO:0102025">
    <property type="term" value="F:ABC-type thiosulfate transporter activity"/>
    <property type="evidence" value="ECO:0007669"/>
    <property type="project" value="RHEA"/>
</dbReference>
<dbReference type="GO" id="GO:0005524">
    <property type="term" value="F:ATP binding"/>
    <property type="evidence" value="ECO:0007669"/>
    <property type="project" value="UniProtKB-KW"/>
</dbReference>
<dbReference type="GO" id="GO:0016887">
    <property type="term" value="F:ATP hydrolysis activity"/>
    <property type="evidence" value="ECO:0007669"/>
    <property type="project" value="InterPro"/>
</dbReference>
<dbReference type="CDD" id="cd03296">
    <property type="entry name" value="ABC_CysA_sulfate_importer"/>
    <property type="match status" value="1"/>
</dbReference>
<dbReference type="FunFam" id="3.40.50.300:FF:000425">
    <property type="entry name" value="Probable ABC transporter, ATP-binding subunit"/>
    <property type="match status" value="1"/>
</dbReference>
<dbReference type="Gene3D" id="3.40.50.300">
    <property type="entry name" value="P-loop containing nucleotide triphosphate hydrolases"/>
    <property type="match status" value="1"/>
</dbReference>
<dbReference type="InterPro" id="IPR003593">
    <property type="entry name" value="AAA+_ATPase"/>
</dbReference>
<dbReference type="InterPro" id="IPR050093">
    <property type="entry name" value="ABC_SmlMolc_Importer"/>
</dbReference>
<dbReference type="InterPro" id="IPR003439">
    <property type="entry name" value="ABC_transporter-like_ATP-bd"/>
</dbReference>
<dbReference type="InterPro" id="IPR017871">
    <property type="entry name" value="ABC_transporter-like_CS"/>
</dbReference>
<dbReference type="InterPro" id="IPR008995">
    <property type="entry name" value="Mo/tungstate-bd_C_term_dom"/>
</dbReference>
<dbReference type="InterPro" id="IPR027417">
    <property type="entry name" value="P-loop_NTPase"/>
</dbReference>
<dbReference type="InterPro" id="IPR005666">
    <property type="entry name" value="Sulph_transpt1"/>
</dbReference>
<dbReference type="InterPro" id="IPR024765">
    <property type="entry name" value="TOBE-like"/>
</dbReference>
<dbReference type="NCBIfam" id="TIGR00968">
    <property type="entry name" value="3a0106s01"/>
    <property type="match status" value="1"/>
</dbReference>
<dbReference type="PANTHER" id="PTHR42781">
    <property type="entry name" value="SPERMIDINE/PUTRESCINE IMPORT ATP-BINDING PROTEIN POTA"/>
    <property type="match status" value="1"/>
</dbReference>
<dbReference type="PANTHER" id="PTHR42781:SF4">
    <property type="entry name" value="SPERMIDINE_PUTRESCINE IMPORT ATP-BINDING PROTEIN POTA"/>
    <property type="match status" value="1"/>
</dbReference>
<dbReference type="Pfam" id="PF00005">
    <property type="entry name" value="ABC_tran"/>
    <property type="match status" value="1"/>
</dbReference>
<dbReference type="Pfam" id="PF12857">
    <property type="entry name" value="TOBE_3"/>
    <property type="match status" value="1"/>
</dbReference>
<dbReference type="SMART" id="SM00382">
    <property type="entry name" value="AAA"/>
    <property type="match status" value="1"/>
</dbReference>
<dbReference type="SUPFAM" id="SSF50331">
    <property type="entry name" value="MOP-like"/>
    <property type="match status" value="1"/>
</dbReference>
<dbReference type="SUPFAM" id="SSF52540">
    <property type="entry name" value="P-loop containing nucleoside triphosphate hydrolases"/>
    <property type="match status" value="1"/>
</dbReference>
<dbReference type="PROSITE" id="PS00211">
    <property type="entry name" value="ABC_TRANSPORTER_1"/>
    <property type="match status" value="1"/>
</dbReference>
<dbReference type="PROSITE" id="PS50893">
    <property type="entry name" value="ABC_TRANSPORTER_2"/>
    <property type="match status" value="1"/>
</dbReference>
<dbReference type="PROSITE" id="PS51237">
    <property type="entry name" value="CYSA"/>
    <property type="match status" value="1"/>
</dbReference>
<comment type="function">
    <text evidence="1">Part of the ABC transporter complex CysAWTP involved in sulfate/thiosulfate import. Responsible for energy coupling to the transport system.</text>
</comment>
<comment type="catalytic activity">
    <reaction evidence="1">
        <text>sulfate(out) + ATP + H2O = sulfate(in) + ADP + phosphate + H(+)</text>
        <dbReference type="Rhea" id="RHEA:10192"/>
        <dbReference type="ChEBI" id="CHEBI:15377"/>
        <dbReference type="ChEBI" id="CHEBI:15378"/>
        <dbReference type="ChEBI" id="CHEBI:16189"/>
        <dbReference type="ChEBI" id="CHEBI:30616"/>
        <dbReference type="ChEBI" id="CHEBI:43474"/>
        <dbReference type="ChEBI" id="CHEBI:456216"/>
        <dbReference type="EC" id="7.3.2.3"/>
    </reaction>
</comment>
<comment type="catalytic activity">
    <reaction evidence="1">
        <text>thiosulfate(out) + ATP + H2O = thiosulfate(in) + ADP + phosphate + H(+)</text>
        <dbReference type="Rhea" id="RHEA:29871"/>
        <dbReference type="ChEBI" id="CHEBI:15377"/>
        <dbReference type="ChEBI" id="CHEBI:15378"/>
        <dbReference type="ChEBI" id="CHEBI:30616"/>
        <dbReference type="ChEBI" id="CHEBI:33542"/>
        <dbReference type="ChEBI" id="CHEBI:43474"/>
        <dbReference type="ChEBI" id="CHEBI:456216"/>
        <dbReference type="EC" id="7.3.2.3"/>
    </reaction>
</comment>
<comment type="subunit">
    <text evidence="1">The complex is composed of two ATP-binding proteins (CysA), two transmembrane proteins (CysT and CysW) and a solute-binding protein (CysP).</text>
</comment>
<comment type="subcellular location">
    <subcellularLocation>
        <location evidence="1">Cell inner membrane</location>
        <topology evidence="1">Peripheral membrane protein</topology>
    </subcellularLocation>
</comment>
<comment type="similarity">
    <text evidence="1">Belongs to the ABC transporter superfamily. Sulfate/tungstate importer (TC 3.A.1.6) family.</text>
</comment>
<comment type="sequence caution" evidence="2">
    <conflict type="erroneous initiation">
        <sequence resource="EMBL-CDS" id="AAL53019"/>
    </conflict>
</comment>